<protein>
    <recommendedName>
        <fullName>Hemagglutinin/amebocyte aggregation factor</fullName>
    </recommendedName>
    <alternativeName>
        <fullName>18K-LAF</fullName>
    </alternativeName>
</protein>
<accession>Q01528</accession>
<dbReference type="EMBL" id="M96983">
    <property type="protein sequence ID" value="AAA28272.1"/>
    <property type="molecule type" value="mRNA"/>
</dbReference>
<dbReference type="PIR" id="A44312">
    <property type="entry name" value="A44312"/>
</dbReference>
<dbReference type="RefSeq" id="XP_013791404.1">
    <property type="nucleotide sequence ID" value="XM_013935950.2"/>
</dbReference>
<dbReference type="EnsemblMetazoa" id="XM_013935950.2">
    <property type="protein sequence ID" value="XP_013791404.1"/>
    <property type="gene ID" value="LOC106475248"/>
</dbReference>
<dbReference type="GeneID" id="106475248"/>
<dbReference type="KEGG" id="lpol:106475248"/>
<dbReference type="OrthoDB" id="5975249at2759"/>
<dbReference type="Proteomes" id="UP000694941">
    <property type="component" value="Unplaced"/>
</dbReference>
<dbReference type="GO" id="GO:0031012">
    <property type="term" value="C:extracellular matrix"/>
    <property type="evidence" value="ECO:0007669"/>
    <property type="project" value="TreeGrafter"/>
</dbReference>
<dbReference type="GO" id="GO:0005615">
    <property type="term" value="C:extracellular space"/>
    <property type="evidence" value="ECO:0007669"/>
    <property type="project" value="TreeGrafter"/>
</dbReference>
<dbReference type="GO" id="GO:0030199">
    <property type="term" value="P:collagen fibril organization"/>
    <property type="evidence" value="ECO:0007669"/>
    <property type="project" value="TreeGrafter"/>
</dbReference>
<dbReference type="InterPro" id="IPR026645">
    <property type="entry name" value="Dermatopontin"/>
</dbReference>
<dbReference type="PANTHER" id="PTHR15040">
    <property type="entry name" value="DERMATOPONTIN-RELATED"/>
    <property type="match status" value="1"/>
</dbReference>
<dbReference type="PANTHER" id="PTHR15040:SF3">
    <property type="entry name" value="SI:DKEY-14D8.6-RELATED"/>
    <property type="match status" value="1"/>
</dbReference>
<dbReference type="Pfam" id="PF14704">
    <property type="entry name" value="DERM"/>
    <property type="match status" value="1"/>
</dbReference>
<organism>
    <name type="scientific">Limulus polyphemus</name>
    <name type="common">Atlantic horseshoe crab</name>
    <dbReference type="NCBI Taxonomy" id="6850"/>
    <lineage>
        <taxon>Eukaryota</taxon>
        <taxon>Metazoa</taxon>
        <taxon>Ecdysozoa</taxon>
        <taxon>Arthropoda</taxon>
        <taxon>Chelicerata</taxon>
        <taxon>Merostomata</taxon>
        <taxon>Xiphosura</taxon>
        <taxon>Limulidae</taxon>
        <taxon>Limulus</taxon>
    </lineage>
</organism>
<proteinExistence type="evidence at protein level"/>
<sequence length="172" mass="20559">MNSPAIVIIIFSTLTFSEAWVNDWDGALNFQCQLKDSIKTISSIHSNHHEDRRWNFGCERTLRDPSCYFTNYVNDWDKLLHFTCKSGEAIAGFNSYHDNRREDRRWKIYCCKDKNKCTDYRTCAWTGYVNSWDGDLHYTVPKDYVLTGVISEHDNHREDRRWKFQHCRLKNC</sequence>
<feature type="signal peptide" evidence="2">
    <location>
        <begin position="1"/>
        <end position="19"/>
    </location>
</feature>
<feature type="chain" id="PRO_0000007370" description="Hemagglutinin/amebocyte aggregation factor">
    <location>
        <begin position="20"/>
        <end position="172"/>
    </location>
</feature>
<feature type="repeat" description="1-1">
    <location>
        <begin position="21"/>
        <end position="25"/>
    </location>
</feature>
<feature type="repeat" description="2-1">
    <location>
        <begin position="50"/>
        <end position="54"/>
    </location>
</feature>
<feature type="repeat" description="1-2">
    <location>
        <begin position="73"/>
        <end position="77"/>
    </location>
</feature>
<feature type="repeat" description="2-2">
    <location>
        <begin position="102"/>
        <end position="106"/>
    </location>
</feature>
<feature type="repeat" description="1-3">
    <location>
        <begin position="129"/>
        <end position="133"/>
    </location>
</feature>
<feature type="repeat" description="2-3">
    <location>
        <begin position="158"/>
        <end position="162"/>
    </location>
</feature>
<feature type="disulfide bond" evidence="1">
    <location>
        <begin position="32"/>
        <end position="58"/>
    </location>
</feature>
<feature type="disulfide bond" evidence="1">
    <location>
        <begin position="67"/>
        <end position="172"/>
    </location>
</feature>
<feature type="disulfide bond" evidence="1">
    <location>
        <begin position="84"/>
        <end position="110"/>
    </location>
</feature>
<feature type="disulfide bond" evidence="1">
    <location>
        <begin position="111"/>
        <end position="117"/>
    </location>
</feature>
<feature type="disulfide bond" evidence="1">
    <location>
        <begin position="123"/>
        <end position="167"/>
    </location>
</feature>
<name>HAAF_LIMPO</name>
<keyword id="KW-0903">Direct protein sequencing</keyword>
<keyword id="KW-1015">Disulfide bond</keyword>
<keyword id="KW-0677">Repeat</keyword>
<keyword id="KW-0964">Secreted</keyword>
<keyword id="KW-0732">Signal</keyword>
<reference key="1">
    <citation type="journal article" date="1992" name="J. Biol. Chem.">
        <title>Isolation, cDNA cloning, and characterization of an 18-kDa hemagglutinin and amebocyte aggregation factor from Limulus polyphemus.</title>
        <authorList>
            <person name="Fujii N."/>
            <person name="Minetti C.A.S.A."/>
            <person name="Nakhasi H.L."/>
            <person name="Chen S.W."/>
            <person name="Barbehenn E."/>
            <person name="Nunes P.H."/>
            <person name="Nguyen N."/>
        </authorList>
    </citation>
    <scope>NUCLEOTIDE SEQUENCE [MRNA]</scope>
    <scope>PROTEIN SEQUENCE OF 20-82</scope>
</reference>
<comment type="function">
    <text>Possesses the property of inducing both aggregation of amebocytes and agglutination of erythrocytes.</text>
</comment>
<comment type="subcellular location">
    <subcellularLocation>
        <location>Secreted</location>
    </subcellularLocation>
    <text>Secreted from amebocyte large secretory granules.</text>
</comment>
<comment type="similarity">
    <text evidence="3">Belongs to the dermatopontin family.</text>
</comment>
<evidence type="ECO:0000250" key="1"/>
<evidence type="ECO:0000269" key="2">
    <source>
    </source>
</evidence>
<evidence type="ECO:0000305" key="3"/>